<keyword id="KW-0687">Ribonucleoprotein</keyword>
<keyword id="KW-0689">Ribosomal protein</keyword>
<keyword id="KW-0694">RNA-binding</keyword>
<keyword id="KW-0699">rRNA-binding</keyword>
<accession>B1AIL8</accession>
<reference key="1">
    <citation type="submission" date="2008-02" db="EMBL/GenBank/DDBJ databases">
        <title>Genome sequence of Ureaplasma parvum serovar 3.</title>
        <authorList>
            <person name="Methe B.A."/>
            <person name="Glass J."/>
            <person name="Waites K."/>
            <person name="Shrivastava S."/>
        </authorList>
    </citation>
    <scope>NUCLEOTIDE SEQUENCE [LARGE SCALE GENOMIC DNA]</scope>
    <source>
        <strain>ATCC 27815 / 27 / NCTC 11736</strain>
    </source>
</reference>
<sequence>MRVKGGSVTRQRRKRWLEKAEGSWGTRNTSYRIARQTVIRAAEYAYRDRRNKKRDFRKLWISRINAAVRELGYTYSQFMNALVKANVVTKDGQGLNRKMLSELAINNPEAFNQLVDKVMK</sequence>
<comment type="function">
    <text evidence="1">Binds directly to 23S ribosomal RNA and is necessary for the in vitro assembly process of the 50S ribosomal subunit. It is not involved in the protein synthesizing functions of that subunit.</text>
</comment>
<comment type="similarity">
    <text evidence="1">Belongs to the bacterial ribosomal protein bL20 family.</text>
</comment>
<dbReference type="EMBL" id="CP000942">
    <property type="protein sequence ID" value="ACA32946.1"/>
    <property type="molecule type" value="Genomic_DNA"/>
</dbReference>
<dbReference type="RefSeq" id="WP_006688834.1">
    <property type="nucleotide sequence ID" value="NC_010503.1"/>
</dbReference>
<dbReference type="SMR" id="B1AIL8"/>
<dbReference type="GeneID" id="29672663"/>
<dbReference type="KEGG" id="upa:UPA3_0237"/>
<dbReference type="HOGENOM" id="CLU_123265_0_1_14"/>
<dbReference type="Proteomes" id="UP000002162">
    <property type="component" value="Chromosome"/>
</dbReference>
<dbReference type="GO" id="GO:1990904">
    <property type="term" value="C:ribonucleoprotein complex"/>
    <property type="evidence" value="ECO:0007669"/>
    <property type="project" value="UniProtKB-KW"/>
</dbReference>
<dbReference type="GO" id="GO:0005840">
    <property type="term" value="C:ribosome"/>
    <property type="evidence" value="ECO:0007669"/>
    <property type="project" value="UniProtKB-KW"/>
</dbReference>
<dbReference type="GO" id="GO:0019843">
    <property type="term" value="F:rRNA binding"/>
    <property type="evidence" value="ECO:0007669"/>
    <property type="project" value="UniProtKB-UniRule"/>
</dbReference>
<dbReference type="GO" id="GO:0003735">
    <property type="term" value="F:structural constituent of ribosome"/>
    <property type="evidence" value="ECO:0007669"/>
    <property type="project" value="InterPro"/>
</dbReference>
<dbReference type="GO" id="GO:0000027">
    <property type="term" value="P:ribosomal large subunit assembly"/>
    <property type="evidence" value="ECO:0007669"/>
    <property type="project" value="UniProtKB-UniRule"/>
</dbReference>
<dbReference type="GO" id="GO:0006412">
    <property type="term" value="P:translation"/>
    <property type="evidence" value="ECO:0007669"/>
    <property type="project" value="InterPro"/>
</dbReference>
<dbReference type="CDD" id="cd07026">
    <property type="entry name" value="Ribosomal_L20"/>
    <property type="match status" value="1"/>
</dbReference>
<dbReference type="FunFam" id="1.10.1900.20:FF:000001">
    <property type="entry name" value="50S ribosomal protein L20"/>
    <property type="match status" value="1"/>
</dbReference>
<dbReference type="Gene3D" id="6.10.160.10">
    <property type="match status" value="1"/>
</dbReference>
<dbReference type="Gene3D" id="1.10.1900.20">
    <property type="entry name" value="Ribosomal protein L20"/>
    <property type="match status" value="1"/>
</dbReference>
<dbReference type="HAMAP" id="MF_00382">
    <property type="entry name" value="Ribosomal_bL20"/>
    <property type="match status" value="1"/>
</dbReference>
<dbReference type="InterPro" id="IPR005813">
    <property type="entry name" value="Ribosomal_bL20"/>
</dbReference>
<dbReference type="InterPro" id="IPR049946">
    <property type="entry name" value="RIBOSOMAL_L20_CS"/>
</dbReference>
<dbReference type="InterPro" id="IPR035566">
    <property type="entry name" value="Ribosomal_protein_bL20_C"/>
</dbReference>
<dbReference type="NCBIfam" id="TIGR01032">
    <property type="entry name" value="rplT_bact"/>
    <property type="match status" value="1"/>
</dbReference>
<dbReference type="PANTHER" id="PTHR10986">
    <property type="entry name" value="39S RIBOSOMAL PROTEIN L20"/>
    <property type="match status" value="1"/>
</dbReference>
<dbReference type="Pfam" id="PF00453">
    <property type="entry name" value="Ribosomal_L20"/>
    <property type="match status" value="1"/>
</dbReference>
<dbReference type="PRINTS" id="PR00062">
    <property type="entry name" value="RIBOSOMALL20"/>
</dbReference>
<dbReference type="SUPFAM" id="SSF74731">
    <property type="entry name" value="Ribosomal protein L20"/>
    <property type="match status" value="1"/>
</dbReference>
<dbReference type="PROSITE" id="PS00937">
    <property type="entry name" value="RIBOSOMAL_L20"/>
    <property type="match status" value="1"/>
</dbReference>
<feature type="chain" id="PRO_1000080103" description="Large ribosomal subunit protein bL20">
    <location>
        <begin position="1"/>
        <end position="120"/>
    </location>
</feature>
<protein>
    <recommendedName>
        <fullName evidence="1">Large ribosomal subunit protein bL20</fullName>
    </recommendedName>
    <alternativeName>
        <fullName evidence="2">50S ribosomal protein L20</fullName>
    </alternativeName>
</protein>
<evidence type="ECO:0000255" key="1">
    <source>
        <dbReference type="HAMAP-Rule" id="MF_00382"/>
    </source>
</evidence>
<evidence type="ECO:0000305" key="2"/>
<proteinExistence type="inferred from homology"/>
<name>RL20_UREP2</name>
<gene>
    <name evidence="1" type="primary">rplT</name>
    <name type="ordered locus">UPA3_0237</name>
</gene>
<organism>
    <name type="scientific">Ureaplasma parvum serovar 3 (strain ATCC 27815 / 27 / NCTC 11736)</name>
    <dbReference type="NCBI Taxonomy" id="505682"/>
    <lineage>
        <taxon>Bacteria</taxon>
        <taxon>Bacillati</taxon>
        <taxon>Mycoplasmatota</taxon>
        <taxon>Mycoplasmoidales</taxon>
        <taxon>Mycoplasmoidaceae</taxon>
        <taxon>Ureaplasma</taxon>
    </lineage>
</organism>